<reference key="1">
    <citation type="journal article" date="1994" name="J. Biol. Chem.">
        <title>Cloning and expression of a cDNA for mouse prostaglandin F receptor.</title>
        <authorList>
            <person name="Sugimoto Y."/>
            <person name="Hasumoto K.Y."/>
            <person name="Namba T."/>
            <person name="Irie A."/>
            <person name="Katsuyama M."/>
            <person name="Negishi M."/>
            <person name="Kakizuka A."/>
            <person name="Narumiya S."/>
            <person name="Ichikawa A."/>
        </authorList>
    </citation>
    <scope>NUCLEOTIDE SEQUENCE [MRNA]</scope>
    <source>
        <strain>ddY</strain>
        <tissue>Ovary</tissue>
    </source>
</reference>
<reference key="2">
    <citation type="journal article" date="2005" name="Science">
        <title>The transcriptional landscape of the mammalian genome.</title>
        <authorList>
            <person name="Carninci P."/>
            <person name="Kasukawa T."/>
            <person name="Katayama S."/>
            <person name="Gough J."/>
            <person name="Frith M.C."/>
            <person name="Maeda N."/>
            <person name="Oyama R."/>
            <person name="Ravasi T."/>
            <person name="Lenhard B."/>
            <person name="Wells C."/>
            <person name="Kodzius R."/>
            <person name="Shimokawa K."/>
            <person name="Bajic V.B."/>
            <person name="Brenner S.E."/>
            <person name="Batalov S."/>
            <person name="Forrest A.R."/>
            <person name="Zavolan M."/>
            <person name="Davis M.J."/>
            <person name="Wilming L.G."/>
            <person name="Aidinis V."/>
            <person name="Allen J.E."/>
            <person name="Ambesi-Impiombato A."/>
            <person name="Apweiler R."/>
            <person name="Aturaliya R.N."/>
            <person name="Bailey T.L."/>
            <person name="Bansal M."/>
            <person name="Baxter L."/>
            <person name="Beisel K.W."/>
            <person name="Bersano T."/>
            <person name="Bono H."/>
            <person name="Chalk A.M."/>
            <person name="Chiu K.P."/>
            <person name="Choudhary V."/>
            <person name="Christoffels A."/>
            <person name="Clutterbuck D.R."/>
            <person name="Crowe M.L."/>
            <person name="Dalla E."/>
            <person name="Dalrymple B.P."/>
            <person name="de Bono B."/>
            <person name="Della Gatta G."/>
            <person name="di Bernardo D."/>
            <person name="Down T."/>
            <person name="Engstrom P."/>
            <person name="Fagiolini M."/>
            <person name="Faulkner G."/>
            <person name="Fletcher C.F."/>
            <person name="Fukushima T."/>
            <person name="Furuno M."/>
            <person name="Futaki S."/>
            <person name="Gariboldi M."/>
            <person name="Georgii-Hemming P."/>
            <person name="Gingeras T.R."/>
            <person name="Gojobori T."/>
            <person name="Green R.E."/>
            <person name="Gustincich S."/>
            <person name="Harbers M."/>
            <person name="Hayashi Y."/>
            <person name="Hensch T.K."/>
            <person name="Hirokawa N."/>
            <person name="Hill D."/>
            <person name="Huminiecki L."/>
            <person name="Iacono M."/>
            <person name="Ikeo K."/>
            <person name="Iwama A."/>
            <person name="Ishikawa T."/>
            <person name="Jakt M."/>
            <person name="Kanapin A."/>
            <person name="Katoh M."/>
            <person name="Kawasawa Y."/>
            <person name="Kelso J."/>
            <person name="Kitamura H."/>
            <person name="Kitano H."/>
            <person name="Kollias G."/>
            <person name="Krishnan S.P."/>
            <person name="Kruger A."/>
            <person name="Kummerfeld S.K."/>
            <person name="Kurochkin I.V."/>
            <person name="Lareau L.F."/>
            <person name="Lazarevic D."/>
            <person name="Lipovich L."/>
            <person name="Liu J."/>
            <person name="Liuni S."/>
            <person name="McWilliam S."/>
            <person name="Madan Babu M."/>
            <person name="Madera M."/>
            <person name="Marchionni L."/>
            <person name="Matsuda H."/>
            <person name="Matsuzawa S."/>
            <person name="Miki H."/>
            <person name="Mignone F."/>
            <person name="Miyake S."/>
            <person name="Morris K."/>
            <person name="Mottagui-Tabar S."/>
            <person name="Mulder N."/>
            <person name="Nakano N."/>
            <person name="Nakauchi H."/>
            <person name="Ng P."/>
            <person name="Nilsson R."/>
            <person name="Nishiguchi S."/>
            <person name="Nishikawa S."/>
            <person name="Nori F."/>
            <person name="Ohara O."/>
            <person name="Okazaki Y."/>
            <person name="Orlando V."/>
            <person name="Pang K.C."/>
            <person name="Pavan W.J."/>
            <person name="Pavesi G."/>
            <person name="Pesole G."/>
            <person name="Petrovsky N."/>
            <person name="Piazza S."/>
            <person name="Reed J."/>
            <person name="Reid J.F."/>
            <person name="Ring B.Z."/>
            <person name="Ringwald M."/>
            <person name="Rost B."/>
            <person name="Ruan Y."/>
            <person name="Salzberg S.L."/>
            <person name="Sandelin A."/>
            <person name="Schneider C."/>
            <person name="Schoenbach C."/>
            <person name="Sekiguchi K."/>
            <person name="Semple C.A."/>
            <person name="Seno S."/>
            <person name="Sessa L."/>
            <person name="Sheng Y."/>
            <person name="Shibata Y."/>
            <person name="Shimada H."/>
            <person name="Shimada K."/>
            <person name="Silva D."/>
            <person name="Sinclair B."/>
            <person name="Sperling S."/>
            <person name="Stupka E."/>
            <person name="Sugiura K."/>
            <person name="Sultana R."/>
            <person name="Takenaka Y."/>
            <person name="Taki K."/>
            <person name="Tammoja K."/>
            <person name="Tan S.L."/>
            <person name="Tang S."/>
            <person name="Taylor M.S."/>
            <person name="Tegner J."/>
            <person name="Teichmann S.A."/>
            <person name="Ueda H.R."/>
            <person name="van Nimwegen E."/>
            <person name="Verardo R."/>
            <person name="Wei C.L."/>
            <person name="Yagi K."/>
            <person name="Yamanishi H."/>
            <person name="Zabarovsky E."/>
            <person name="Zhu S."/>
            <person name="Zimmer A."/>
            <person name="Hide W."/>
            <person name="Bult C."/>
            <person name="Grimmond S.M."/>
            <person name="Teasdale R.D."/>
            <person name="Liu E.T."/>
            <person name="Brusic V."/>
            <person name="Quackenbush J."/>
            <person name="Wahlestedt C."/>
            <person name="Mattick J.S."/>
            <person name="Hume D.A."/>
            <person name="Kai C."/>
            <person name="Sasaki D."/>
            <person name="Tomaru Y."/>
            <person name="Fukuda S."/>
            <person name="Kanamori-Katayama M."/>
            <person name="Suzuki M."/>
            <person name="Aoki J."/>
            <person name="Arakawa T."/>
            <person name="Iida J."/>
            <person name="Imamura K."/>
            <person name="Itoh M."/>
            <person name="Kato T."/>
            <person name="Kawaji H."/>
            <person name="Kawagashira N."/>
            <person name="Kawashima T."/>
            <person name="Kojima M."/>
            <person name="Kondo S."/>
            <person name="Konno H."/>
            <person name="Nakano K."/>
            <person name="Ninomiya N."/>
            <person name="Nishio T."/>
            <person name="Okada M."/>
            <person name="Plessy C."/>
            <person name="Shibata K."/>
            <person name="Shiraki T."/>
            <person name="Suzuki S."/>
            <person name="Tagami M."/>
            <person name="Waki K."/>
            <person name="Watahiki A."/>
            <person name="Okamura-Oho Y."/>
            <person name="Suzuki H."/>
            <person name="Kawai J."/>
            <person name="Hayashizaki Y."/>
        </authorList>
    </citation>
    <scope>NUCLEOTIDE SEQUENCE [LARGE SCALE MRNA]</scope>
    <source>
        <strain>C57BL/6J</strain>
        <tissue>Ovary</tissue>
    </source>
</reference>
<reference key="3">
    <citation type="journal article" date="2004" name="Genome Res.">
        <title>The status, quality, and expansion of the NIH full-length cDNA project: the Mammalian Gene Collection (MGC).</title>
        <authorList>
            <consortium name="The MGC Project Team"/>
        </authorList>
    </citation>
    <scope>NUCLEOTIDE SEQUENCE [LARGE SCALE MRNA]</scope>
    <source>
        <strain>C57BL/6J</strain>
        <tissue>Embryo</tissue>
    </source>
</reference>
<sequence length="366" mass="40700">MSMNSSKQPVSPAAGLIANTTCQTENRLSVFFSIIFMTVGILSNSLAIAILMKAYQRFRQKSKASFLLLASGLVITDFFGHLINGGIAVFVYASDKDWIRFDQSNILCSIFGISMVFSGLCPLFLGSAMAIERCIGVTNPIFHSTKITSKHVKMILSGVCMFAVFVAVLPILGHRDYQIQASRTWCFYNTEHIEDWEDRFYLLFFSFLGLLALGVSFSCNAVTGVTLLRVKFRSQQHRQGRSHHLEMIIQLLAIMCVSCVCWSPFLVTMANIAINGNNSPVTCETTLFALRMATWNQILDPWVYILLRKAVLRNLYKLASRCCGVNIISLHIWELSSIKNSLKVAAISESPAAEKESQQASSEAGL</sequence>
<protein>
    <recommendedName>
        <fullName>Prostaglandin F2-alpha receptor</fullName>
        <shortName>PGF receptor</shortName>
        <shortName>PGF2-alpha receptor</shortName>
    </recommendedName>
    <alternativeName>
        <fullName>Prostanoid FP receptor</fullName>
    </alternativeName>
</protein>
<comment type="function">
    <text evidence="1">Receptor for prostaglandin F2-alpha (PGF2-alpha). The activity of this receptor is mediated by G proteins which activate a phosphatidylinositol-calcium second messenger system. Initiates luteolysis in the corpus luteum (By similarity).</text>
</comment>
<comment type="subcellular location">
    <subcellularLocation>
        <location>Cell membrane</location>
        <topology>Multi-pass membrane protein</topology>
    </subcellularLocation>
</comment>
<comment type="similarity">
    <text evidence="3">Belongs to the G-protein coupled receptor 1 family.</text>
</comment>
<proteinExistence type="evidence at transcript level"/>
<name>PF2R_MOUSE</name>
<feature type="chain" id="PRO_0000070071" description="Prostaglandin F2-alpha receptor">
    <location>
        <begin position="1"/>
        <end position="366"/>
    </location>
</feature>
<feature type="topological domain" description="Extracellular" evidence="2">
    <location>
        <begin position="1"/>
        <end position="31"/>
    </location>
</feature>
<feature type="transmembrane region" description="Helical; Name=1" evidence="2">
    <location>
        <begin position="32"/>
        <end position="55"/>
    </location>
</feature>
<feature type="topological domain" description="Cytoplasmic" evidence="2">
    <location>
        <begin position="56"/>
        <end position="69"/>
    </location>
</feature>
<feature type="transmembrane region" description="Helical; Name=2" evidence="2">
    <location>
        <begin position="70"/>
        <end position="90"/>
    </location>
</feature>
<feature type="topological domain" description="Extracellular" evidence="2">
    <location>
        <begin position="91"/>
        <end position="109"/>
    </location>
</feature>
<feature type="transmembrane region" description="Helical; Name=3" evidence="2">
    <location>
        <begin position="110"/>
        <end position="131"/>
    </location>
</feature>
<feature type="topological domain" description="Cytoplasmic" evidence="2">
    <location>
        <begin position="132"/>
        <end position="152"/>
    </location>
</feature>
<feature type="transmembrane region" description="Helical; Name=4" evidence="2">
    <location>
        <begin position="153"/>
        <end position="175"/>
    </location>
</feature>
<feature type="topological domain" description="Extracellular" evidence="2">
    <location>
        <begin position="176"/>
        <end position="198"/>
    </location>
</feature>
<feature type="transmembrane region" description="Helical; Name=5" evidence="2">
    <location>
        <begin position="199"/>
        <end position="224"/>
    </location>
</feature>
<feature type="topological domain" description="Cytoplasmic" evidence="2">
    <location>
        <begin position="225"/>
        <end position="250"/>
    </location>
</feature>
<feature type="transmembrane region" description="Helical; Name=6" evidence="2">
    <location>
        <begin position="251"/>
        <end position="267"/>
    </location>
</feature>
<feature type="topological domain" description="Extracellular" evidence="2">
    <location>
        <begin position="268"/>
        <end position="285"/>
    </location>
</feature>
<feature type="transmembrane region" description="Helical; Name=7" evidence="2">
    <location>
        <begin position="286"/>
        <end position="307"/>
    </location>
</feature>
<feature type="topological domain" description="Cytoplasmic" evidence="2">
    <location>
        <begin position="308"/>
        <end position="366"/>
    </location>
</feature>
<feature type="glycosylation site" description="N-linked (GlcNAc...) asparagine" evidence="2">
    <location>
        <position position="4"/>
    </location>
</feature>
<feature type="glycosylation site" description="N-linked (GlcNAc...) asparagine" evidence="2">
    <location>
        <position position="19"/>
    </location>
</feature>
<feature type="disulfide bond" evidence="3">
    <location>
        <begin position="108"/>
        <end position="186"/>
    </location>
</feature>
<keyword id="KW-1003">Cell membrane</keyword>
<keyword id="KW-1015">Disulfide bond</keyword>
<keyword id="KW-0297">G-protein coupled receptor</keyword>
<keyword id="KW-0325">Glycoprotein</keyword>
<keyword id="KW-0472">Membrane</keyword>
<keyword id="KW-0675">Receptor</keyword>
<keyword id="KW-1185">Reference proteome</keyword>
<keyword id="KW-0807">Transducer</keyword>
<keyword id="KW-0812">Transmembrane</keyword>
<keyword id="KW-1133">Transmembrane helix</keyword>
<dbReference type="EMBL" id="D17433">
    <property type="protein sequence ID" value="BAA04251.1"/>
    <property type="molecule type" value="mRNA"/>
</dbReference>
<dbReference type="EMBL" id="AK087833">
    <property type="protein sequence ID" value="BAC40021.1"/>
    <property type="molecule type" value="mRNA"/>
</dbReference>
<dbReference type="EMBL" id="BC064794">
    <property type="protein sequence ID" value="AAH64794.1"/>
    <property type="molecule type" value="mRNA"/>
</dbReference>
<dbReference type="CCDS" id="CCDS17913.1"/>
<dbReference type="PIR" id="A49877">
    <property type="entry name" value="A49877"/>
</dbReference>
<dbReference type="RefSeq" id="NP_032992.1">
    <property type="nucleotide sequence ID" value="NM_008966.3"/>
</dbReference>
<dbReference type="SMR" id="P43117"/>
<dbReference type="FunCoup" id="P43117">
    <property type="interactions" value="1265"/>
</dbReference>
<dbReference type="STRING" id="10090.ENSMUSP00000029670"/>
<dbReference type="BindingDB" id="P43117"/>
<dbReference type="ChEMBL" id="CHEMBL5000"/>
<dbReference type="DrugCentral" id="P43117"/>
<dbReference type="GuidetoPHARMACOLOGY" id="344"/>
<dbReference type="GlyCosmos" id="P43117">
    <property type="glycosylation" value="2 sites, No reported glycans"/>
</dbReference>
<dbReference type="GlyGen" id="P43117">
    <property type="glycosylation" value="2 sites"/>
</dbReference>
<dbReference type="PhosphoSitePlus" id="P43117"/>
<dbReference type="PaxDb" id="10090-ENSMUSP00000029670"/>
<dbReference type="ProteomicsDB" id="287685"/>
<dbReference type="Pumba" id="P43117"/>
<dbReference type="Antibodypedia" id="19743">
    <property type="antibodies" value="183 antibodies from 28 providers"/>
</dbReference>
<dbReference type="DNASU" id="19220"/>
<dbReference type="Ensembl" id="ENSMUST00000029670.7">
    <property type="protein sequence ID" value="ENSMUSP00000029670.6"/>
    <property type="gene ID" value="ENSMUSG00000028036.7"/>
</dbReference>
<dbReference type="Ensembl" id="ENSMUST00000106126.2">
    <property type="protein sequence ID" value="ENSMUSP00000101732.2"/>
    <property type="gene ID" value="ENSMUSG00000028036.7"/>
</dbReference>
<dbReference type="GeneID" id="19220"/>
<dbReference type="KEGG" id="mmu:19220"/>
<dbReference type="UCSC" id="uc008rsm.1">
    <property type="organism name" value="mouse"/>
</dbReference>
<dbReference type="AGR" id="MGI:97796"/>
<dbReference type="CTD" id="5737"/>
<dbReference type="MGI" id="MGI:97796">
    <property type="gene designation" value="Ptgfr"/>
</dbReference>
<dbReference type="VEuPathDB" id="HostDB:ENSMUSG00000028036"/>
<dbReference type="eggNOG" id="KOG3656">
    <property type="taxonomic scope" value="Eukaryota"/>
</dbReference>
<dbReference type="GeneTree" id="ENSGT01030000234559"/>
<dbReference type="HOGENOM" id="CLU_045991_3_0_1"/>
<dbReference type="InParanoid" id="P43117"/>
<dbReference type="OMA" id="ILGHRNY"/>
<dbReference type="OrthoDB" id="5959154at2759"/>
<dbReference type="PhylomeDB" id="P43117"/>
<dbReference type="TreeFam" id="TF324982"/>
<dbReference type="Reactome" id="R-MMU-391908">
    <property type="pathway name" value="Prostanoid ligand receptors"/>
</dbReference>
<dbReference type="Reactome" id="R-MMU-416476">
    <property type="pathway name" value="G alpha (q) signalling events"/>
</dbReference>
<dbReference type="BioGRID-ORCS" id="19220">
    <property type="hits" value="2 hits in 77 CRISPR screens"/>
</dbReference>
<dbReference type="PRO" id="PR:P43117"/>
<dbReference type="Proteomes" id="UP000000589">
    <property type="component" value="Chromosome 3"/>
</dbReference>
<dbReference type="RNAct" id="P43117">
    <property type="molecule type" value="protein"/>
</dbReference>
<dbReference type="Bgee" id="ENSMUSG00000028036">
    <property type="expression patterns" value="Expressed in lumbar dorsal root ganglion and 92 other cell types or tissues"/>
</dbReference>
<dbReference type="ExpressionAtlas" id="P43117">
    <property type="expression patterns" value="baseline and differential"/>
</dbReference>
<dbReference type="GO" id="GO:0005737">
    <property type="term" value="C:cytoplasm"/>
    <property type="evidence" value="ECO:0007669"/>
    <property type="project" value="Ensembl"/>
</dbReference>
<dbReference type="GO" id="GO:0005576">
    <property type="term" value="C:extracellular region"/>
    <property type="evidence" value="ECO:0007669"/>
    <property type="project" value="Ensembl"/>
</dbReference>
<dbReference type="GO" id="GO:0005886">
    <property type="term" value="C:plasma membrane"/>
    <property type="evidence" value="ECO:0007669"/>
    <property type="project" value="UniProtKB-SubCell"/>
</dbReference>
<dbReference type="GO" id="GO:0004958">
    <property type="term" value="F:prostaglandin F receptor activity"/>
    <property type="evidence" value="ECO:0007669"/>
    <property type="project" value="Ensembl"/>
</dbReference>
<dbReference type="GO" id="GO:0071799">
    <property type="term" value="P:cellular response to prostaglandin D stimulus"/>
    <property type="evidence" value="ECO:0007669"/>
    <property type="project" value="Ensembl"/>
</dbReference>
<dbReference type="GO" id="GO:0043066">
    <property type="term" value="P:negative regulation of apoptotic process"/>
    <property type="evidence" value="ECO:0000315"/>
    <property type="project" value="MGI"/>
</dbReference>
<dbReference type="GO" id="GO:0008284">
    <property type="term" value="P:positive regulation of cell population proliferation"/>
    <property type="evidence" value="ECO:0007669"/>
    <property type="project" value="Ensembl"/>
</dbReference>
<dbReference type="GO" id="GO:0010628">
    <property type="term" value="P:positive regulation of gene expression"/>
    <property type="evidence" value="ECO:0000314"/>
    <property type="project" value="CACAO"/>
</dbReference>
<dbReference type="GO" id="GO:0032355">
    <property type="term" value="P:response to estradiol"/>
    <property type="evidence" value="ECO:0000314"/>
    <property type="project" value="CACAO"/>
</dbReference>
<dbReference type="GO" id="GO:0032496">
    <property type="term" value="P:response to lipopolysaccharide"/>
    <property type="evidence" value="ECO:0000315"/>
    <property type="project" value="MGI"/>
</dbReference>
<dbReference type="CDD" id="cd15145">
    <property type="entry name" value="7tmA_FP"/>
    <property type="match status" value="1"/>
</dbReference>
<dbReference type="FunFam" id="1.20.1070.10:FF:000129">
    <property type="entry name" value="Prostaglandin F2-alpha receptor"/>
    <property type="match status" value="1"/>
</dbReference>
<dbReference type="Gene3D" id="1.20.1070.10">
    <property type="entry name" value="Rhodopsin 7-helix transmembrane proteins"/>
    <property type="match status" value="1"/>
</dbReference>
<dbReference type="InterPro" id="IPR000276">
    <property type="entry name" value="GPCR_Rhodpsn"/>
</dbReference>
<dbReference type="InterPro" id="IPR017452">
    <property type="entry name" value="GPCR_Rhodpsn_7TM"/>
</dbReference>
<dbReference type="InterPro" id="IPR000141">
    <property type="entry name" value="PglndnF_rcpt"/>
</dbReference>
<dbReference type="InterPro" id="IPR008365">
    <property type="entry name" value="Prostanoid_rcpt"/>
</dbReference>
<dbReference type="InterPro" id="IPR001244">
    <property type="entry name" value="Prostglndn_DP_rcpt"/>
</dbReference>
<dbReference type="PANTHER" id="PTHR11866">
    <property type="entry name" value="G-PROTEIN COUPLED RECEPTOR FAMILY 1 MEMBER"/>
    <property type="match status" value="1"/>
</dbReference>
<dbReference type="PANTHER" id="PTHR11866:SF4">
    <property type="entry name" value="PROSTAGLANDIN F2-ALPHA RECEPTOR"/>
    <property type="match status" value="1"/>
</dbReference>
<dbReference type="Pfam" id="PF00001">
    <property type="entry name" value="7tm_1"/>
    <property type="match status" value="1"/>
</dbReference>
<dbReference type="PRINTS" id="PR00237">
    <property type="entry name" value="GPCRRHODOPSN"/>
</dbReference>
<dbReference type="PRINTS" id="PR00428">
    <property type="entry name" value="PROSTAGLNDNR"/>
</dbReference>
<dbReference type="PRINTS" id="PR01788">
    <property type="entry name" value="PROSTANOIDR"/>
</dbReference>
<dbReference type="PRINTS" id="PR00855">
    <property type="entry name" value="PRSTNOIDFPR"/>
</dbReference>
<dbReference type="SUPFAM" id="SSF81321">
    <property type="entry name" value="Family A G protein-coupled receptor-like"/>
    <property type="match status" value="1"/>
</dbReference>
<dbReference type="PROSITE" id="PS00237">
    <property type="entry name" value="G_PROTEIN_RECEP_F1_1"/>
    <property type="match status" value="1"/>
</dbReference>
<dbReference type="PROSITE" id="PS50262">
    <property type="entry name" value="G_PROTEIN_RECEP_F1_2"/>
    <property type="match status" value="1"/>
</dbReference>
<evidence type="ECO:0000250" key="1"/>
<evidence type="ECO:0000255" key="2"/>
<evidence type="ECO:0000255" key="3">
    <source>
        <dbReference type="PROSITE-ProRule" id="PRU00521"/>
    </source>
</evidence>
<gene>
    <name type="primary">Ptgfr</name>
</gene>
<organism>
    <name type="scientific">Mus musculus</name>
    <name type="common">Mouse</name>
    <dbReference type="NCBI Taxonomy" id="10090"/>
    <lineage>
        <taxon>Eukaryota</taxon>
        <taxon>Metazoa</taxon>
        <taxon>Chordata</taxon>
        <taxon>Craniata</taxon>
        <taxon>Vertebrata</taxon>
        <taxon>Euteleostomi</taxon>
        <taxon>Mammalia</taxon>
        <taxon>Eutheria</taxon>
        <taxon>Euarchontoglires</taxon>
        <taxon>Glires</taxon>
        <taxon>Rodentia</taxon>
        <taxon>Myomorpha</taxon>
        <taxon>Muroidea</taxon>
        <taxon>Muridae</taxon>
        <taxon>Murinae</taxon>
        <taxon>Mus</taxon>
        <taxon>Mus</taxon>
    </lineage>
</organism>
<accession>P43117</accession>